<comment type="function">
    <text evidence="1">The RecF protein is involved in DNA metabolism; it is required for DNA replication and normal SOS inducibility. RecF binds preferentially to single-stranded, linear DNA. It also seems to bind ATP.</text>
</comment>
<comment type="subcellular location">
    <subcellularLocation>
        <location evidence="1">Cytoplasm</location>
    </subcellularLocation>
</comment>
<comment type="similarity">
    <text evidence="1">Belongs to the RecF family.</text>
</comment>
<protein>
    <recommendedName>
        <fullName evidence="1">DNA replication and repair protein RecF</fullName>
    </recommendedName>
</protein>
<evidence type="ECO:0000255" key="1">
    <source>
        <dbReference type="HAMAP-Rule" id="MF_00365"/>
    </source>
</evidence>
<sequence length="357" mass="40419">MSLTRLLIKDFRNIENADLALSPGFNFLVGANGSGKTSVLEAIYTLGHGRAFRSLQVGRVIRHEQESFILHGRLQGSERETSIGLTKDKQGDSKVRIDGTDGHKVAELALLMPMQLITPEGFTLLNGGPKYRRAFLDWGCFHNEAGFFNAWSNLKRLLKQRNAALRQVTRYAQVRPWDMELVPLAEQISRWRAEYSAGIAEDMADTCKQFLPEFSLTFSFQRGWEKETDYAEVLERSFERDRMLTYTAHGPHKADFRIRADGAPVEDTLSRGQLKLLMCALRLAQGEFLTRESGRRCLYLIDDFASELDDARRGLLASRLKATQSQVFVSAISAEHVLDMSDKNSKMFTVEKGKITD</sequence>
<feature type="chain" id="PRO_1000059903" description="DNA replication and repair protein RecF">
    <location>
        <begin position="1"/>
        <end position="357"/>
    </location>
</feature>
<feature type="binding site" evidence="1">
    <location>
        <begin position="30"/>
        <end position="37"/>
    </location>
    <ligand>
        <name>ATP</name>
        <dbReference type="ChEBI" id="CHEBI:30616"/>
    </ligand>
</feature>
<organism>
    <name type="scientific">Enterobacter sp. (strain 638)</name>
    <dbReference type="NCBI Taxonomy" id="399742"/>
    <lineage>
        <taxon>Bacteria</taxon>
        <taxon>Pseudomonadati</taxon>
        <taxon>Pseudomonadota</taxon>
        <taxon>Gammaproteobacteria</taxon>
        <taxon>Enterobacterales</taxon>
        <taxon>Enterobacteriaceae</taxon>
        <taxon>Enterobacter</taxon>
    </lineage>
</organism>
<proteinExistence type="inferred from homology"/>
<keyword id="KW-0067">ATP-binding</keyword>
<keyword id="KW-0963">Cytoplasm</keyword>
<keyword id="KW-0227">DNA damage</keyword>
<keyword id="KW-0234">DNA repair</keyword>
<keyword id="KW-0235">DNA replication</keyword>
<keyword id="KW-0238">DNA-binding</keyword>
<keyword id="KW-0547">Nucleotide-binding</keyword>
<keyword id="KW-0742">SOS response</keyword>
<accession>A4W4R3</accession>
<name>RECF_ENT38</name>
<gene>
    <name evidence="1" type="primary">recF</name>
    <name type="ordered locus">Ent638_0003</name>
</gene>
<dbReference type="EMBL" id="CP000653">
    <property type="protein sequence ID" value="ABP58693.1"/>
    <property type="molecule type" value="Genomic_DNA"/>
</dbReference>
<dbReference type="RefSeq" id="WP_011915271.1">
    <property type="nucleotide sequence ID" value="NC_009436.1"/>
</dbReference>
<dbReference type="SMR" id="A4W4R3"/>
<dbReference type="STRING" id="399742.Ent638_0003"/>
<dbReference type="GeneID" id="93307160"/>
<dbReference type="KEGG" id="ent:Ent638_0003"/>
<dbReference type="eggNOG" id="COG1195">
    <property type="taxonomic scope" value="Bacteria"/>
</dbReference>
<dbReference type="HOGENOM" id="CLU_040267_0_0_6"/>
<dbReference type="OrthoDB" id="9803889at2"/>
<dbReference type="Proteomes" id="UP000000230">
    <property type="component" value="Chromosome"/>
</dbReference>
<dbReference type="GO" id="GO:0005737">
    <property type="term" value="C:cytoplasm"/>
    <property type="evidence" value="ECO:0007669"/>
    <property type="project" value="UniProtKB-SubCell"/>
</dbReference>
<dbReference type="GO" id="GO:0005524">
    <property type="term" value="F:ATP binding"/>
    <property type="evidence" value="ECO:0007669"/>
    <property type="project" value="UniProtKB-UniRule"/>
</dbReference>
<dbReference type="GO" id="GO:0003697">
    <property type="term" value="F:single-stranded DNA binding"/>
    <property type="evidence" value="ECO:0007669"/>
    <property type="project" value="UniProtKB-UniRule"/>
</dbReference>
<dbReference type="GO" id="GO:0006260">
    <property type="term" value="P:DNA replication"/>
    <property type="evidence" value="ECO:0007669"/>
    <property type="project" value="UniProtKB-UniRule"/>
</dbReference>
<dbReference type="GO" id="GO:0000731">
    <property type="term" value="P:DNA synthesis involved in DNA repair"/>
    <property type="evidence" value="ECO:0007669"/>
    <property type="project" value="TreeGrafter"/>
</dbReference>
<dbReference type="GO" id="GO:0006302">
    <property type="term" value="P:double-strand break repair"/>
    <property type="evidence" value="ECO:0007669"/>
    <property type="project" value="TreeGrafter"/>
</dbReference>
<dbReference type="GO" id="GO:0009432">
    <property type="term" value="P:SOS response"/>
    <property type="evidence" value="ECO:0007669"/>
    <property type="project" value="UniProtKB-UniRule"/>
</dbReference>
<dbReference type="FunFam" id="1.20.1050.90:FF:000001">
    <property type="entry name" value="DNA replication and repair protein RecF"/>
    <property type="match status" value="1"/>
</dbReference>
<dbReference type="Gene3D" id="3.40.50.300">
    <property type="entry name" value="P-loop containing nucleotide triphosphate hydrolases"/>
    <property type="match status" value="1"/>
</dbReference>
<dbReference type="Gene3D" id="1.20.1050.90">
    <property type="entry name" value="RecF/RecN/SMC, N-terminal domain"/>
    <property type="match status" value="1"/>
</dbReference>
<dbReference type="HAMAP" id="MF_00365">
    <property type="entry name" value="RecF"/>
    <property type="match status" value="1"/>
</dbReference>
<dbReference type="InterPro" id="IPR001238">
    <property type="entry name" value="DNA-binding_RecF"/>
</dbReference>
<dbReference type="InterPro" id="IPR018078">
    <property type="entry name" value="DNA-binding_RecF_CS"/>
</dbReference>
<dbReference type="InterPro" id="IPR027417">
    <property type="entry name" value="P-loop_NTPase"/>
</dbReference>
<dbReference type="InterPro" id="IPR003395">
    <property type="entry name" value="RecF/RecN/SMC_N"/>
</dbReference>
<dbReference type="InterPro" id="IPR042174">
    <property type="entry name" value="RecF_2"/>
</dbReference>
<dbReference type="NCBIfam" id="TIGR00611">
    <property type="entry name" value="recf"/>
    <property type="match status" value="1"/>
</dbReference>
<dbReference type="PANTHER" id="PTHR32182">
    <property type="entry name" value="DNA REPLICATION AND REPAIR PROTEIN RECF"/>
    <property type="match status" value="1"/>
</dbReference>
<dbReference type="PANTHER" id="PTHR32182:SF0">
    <property type="entry name" value="DNA REPLICATION AND REPAIR PROTEIN RECF"/>
    <property type="match status" value="1"/>
</dbReference>
<dbReference type="Pfam" id="PF02463">
    <property type="entry name" value="SMC_N"/>
    <property type="match status" value="1"/>
</dbReference>
<dbReference type="SUPFAM" id="SSF52540">
    <property type="entry name" value="P-loop containing nucleoside triphosphate hydrolases"/>
    <property type="match status" value="1"/>
</dbReference>
<dbReference type="PROSITE" id="PS00617">
    <property type="entry name" value="RECF_1"/>
    <property type="match status" value="1"/>
</dbReference>
<dbReference type="PROSITE" id="PS00618">
    <property type="entry name" value="RECF_2"/>
    <property type="match status" value="1"/>
</dbReference>
<reference key="1">
    <citation type="journal article" date="2010" name="PLoS Genet.">
        <title>Genome sequence of the plant growth promoting endophytic bacterium Enterobacter sp. 638.</title>
        <authorList>
            <person name="Taghavi S."/>
            <person name="van der Lelie D."/>
            <person name="Hoffman A."/>
            <person name="Zhang Y.B."/>
            <person name="Walla M.D."/>
            <person name="Vangronsveld J."/>
            <person name="Newman L."/>
            <person name="Monchy S."/>
        </authorList>
    </citation>
    <scope>NUCLEOTIDE SEQUENCE [LARGE SCALE GENOMIC DNA]</scope>
    <source>
        <strain>638</strain>
    </source>
</reference>